<name>DNAJ_BACMK</name>
<organism>
    <name type="scientific">Bacillus mycoides (strain KBAB4)</name>
    <name type="common">Bacillus weihenstephanensis</name>
    <dbReference type="NCBI Taxonomy" id="315730"/>
    <lineage>
        <taxon>Bacteria</taxon>
        <taxon>Bacillati</taxon>
        <taxon>Bacillota</taxon>
        <taxon>Bacilli</taxon>
        <taxon>Bacillales</taxon>
        <taxon>Bacillaceae</taxon>
        <taxon>Bacillus</taxon>
        <taxon>Bacillus cereus group</taxon>
    </lineage>
</organism>
<accession>A9VHU0</accession>
<sequence length="368" mass="40251">MNKRDYYEVLGLSQGASKDEIKKAYRRLAKKYHPDVSKEENAIEKFKEVQEAYEVLSDDQKRAQYDQFGHAGPNQGFGGGGDFGGGFGFEDIFSSFFGGGGGRRRDPNAPRQGADLQYQVTLEFEEAIFGKELNVEIPVEDPCDTCKGSGAKPGTSKETCKHCSGSGQVSVEQNTPFGRIVNRQACGHCSGTGQMIKEKCTTCHGSGKVRKRKKINVKIPAGIDNGQQIRVSGKGEAGVNGGPAGDLYVVVHVRNHEFFEREGDHIICEMPITFAQMALGAEVEVPTVHGKVKLKIPAGTQTGTEFRLKGKGAPNVRGYGQGDQYVVVRVVVPTKLTSHQKDLLREFAGQEEQDDSLFRKLKRAFKGE</sequence>
<dbReference type="EMBL" id="CP000903">
    <property type="protein sequence ID" value="ABY45325.1"/>
    <property type="molecule type" value="Genomic_DNA"/>
</dbReference>
<dbReference type="RefSeq" id="WP_002015197.1">
    <property type="nucleotide sequence ID" value="NC_010184.1"/>
</dbReference>
<dbReference type="SMR" id="A9VHU0"/>
<dbReference type="GeneID" id="66266112"/>
<dbReference type="KEGG" id="bwe:BcerKBAB4_4164"/>
<dbReference type="eggNOG" id="COG0484">
    <property type="taxonomic scope" value="Bacteria"/>
</dbReference>
<dbReference type="HOGENOM" id="CLU_017633_0_7_9"/>
<dbReference type="Proteomes" id="UP000002154">
    <property type="component" value="Chromosome"/>
</dbReference>
<dbReference type="GO" id="GO:0005737">
    <property type="term" value="C:cytoplasm"/>
    <property type="evidence" value="ECO:0007669"/>
    <property type="project" value="UniProtKB-SubCell"/>
</dbReference>
<dbReference type="GO" id="GO:0005524">
    <property type="term" value="F:ATP binding"/>
    <property type="evidence" value="ECO:0007669"/>
    <property type="project" value="InterPro"/>
</dbReference>
<dbReference type="GO" id="GO:0031072">
    <property type="term" value="F:heat shock protein binding"/>
    <property type="evidence" value="ECO:0007669"/>
    <property type="project" value="InterPro"/>
</dbReference>
<dbReference type="GO" id="GO:0051082">
    <property type="term" value="F:unfolded protein binding"/>
    <property type="evidence" value="ECO:0007669"/>
    <property type="project" value="UniProtKB-UniRule"/>
</dbReference>
<dbReference type="GO" id="GO:0008270">
    <property type="term" value="F:zinc ion binding"/>
    <property type="evidence" value="ECO:0007669"/>
    <property type="project" value="UniProtKB-UniRule"/>
</dbReference>
<dbReference type="GO" id="GO:0051085">
    <property type="term" value="P:chaperone cofactor-dependent protein refolding"/>
    <property type="evidence" value="ECO:0007669"/>
    <property type="project" value="TreeGrafter"/>
</dbReference>
<dbReference type="GO" id="GO:0006260">
    <property type="term" value="P:DNA replication"/>
    <property type="evidence" value="ECO:0007669"/>
    <property type="project" value="UniProtKB-KW"/>
</dbReference>
<dbReference type="GO" id="GO:0042026">
    <property type="term" value="P:protein refolding"/>
    <property type="evidence" value="ECO:0007669"/>
    <property type="project" value="TreeGrafter"/>
</dbReference>
<dbReference type="GO" id="GO:0009408">
    <property type="term" value="P:response to heat"/>
    <property type="evidence" value="ECO:0007669"/>
    <property type="project" value="InterPro"/>
</dbReference>
<dbReference type="CDD" id="cd06257">
    <property type="entry name" value="DnaJ"/>
    <property type="match status" value="1"/>
</dbReference>
<dbReference type="CDD" id="cd10747">
    <property type="entry name" value="DnaJ_C"/>
    <property type="match status" value="1"/>
</dbReference>
<dbReference type="CDD" id="cd10719">
    <property type="entry name" value="DnaJ_zf"/>
    <property type="match status" value="1"/>
</dbReference>
<dbReference type="FunFam" id="1.10.287.110:FF:000031">
    <property type="entry name" value="Molecular chaperone DnaJ"/>
    <property type="match status" value="1"/>
</dbReference>
<dbReference type="FunFam" id="2.10.230.10:FF:000002">
    <property type="entry name" value="Molecular chaperone DnaJ"/>
    <property type="match status" value="1"/>
</dbReference>
<dbReference type="FunFam" id="2.60.260.20:FF:000004">
    <property type="entry name" value="Molecular chaperone DnaJ"/>
    <property type="match status" value="1"/>
</dbReference>
<dbReference type="FunFam" id="2.60.260.20:FF:000009">
    <property type="entry name" value="Putative Mitochondrial DnaJ chaperone"/>
    <property type="match status" value="1"/>
</dbReference>
<dbReference type="Gene3D" id="1.10.287.110">
    <property type="entry name" value="DnaJ domain"/>
    <property type="match status" value="1"/>
</dbReference>
<dbReference type="Gene3D" id="2.10.230.10">
    <property type="entry name" value="Heat shock protein DnaJ, cysteine-rich domain"/>
    <property type="match status" value="1"/>
</dbReference>
<dbReference type="Gene3D" id="2.60.260.20">
    <property type="entry name" value="Urease metallochaperone UreE, N-terminal domain"/>
    <property type="match status" value="2"/>
</dbReference>
<dbReference type="HAMAP" id="MF_01152">
    <property type="entry name" value="DnaJ"/>
    <property type="match status" value="1"/>
</dbReference>
<dbReference type="InterPro" id="IPR012724">
    <property type="entry name" value="DnaJ"/>
</dbReference>
<dbReference type="InterPro" id="IPR002939">
    <property type="entry name" value="DnaJ_C"/>
</dbReference>
<dbReference type="InterPro" id="IPR001623">
    <property type="entry name" value="DnaJ_domain"/>
</dbReference>
<dbReference type="InterPro" id="IPR018253">
    <property type="entry name" value="DnaJ_domain_CS"/>
</dbReference>
<dbReference type="InterPro" id="IPR008971">
    <property type="entry name" value="HSP40/DnaJ_pept-bd"/>
</dbReference>
<dbReference type="InterPro" id="IPR001305">
    <property type="entry name" value="HSP_DnaJ_Cys-rich_dom"/>
</dbReference>
<dbReference type="InterPro" id="IPR036410">
    <property type="entry name" value="HSP_DnaJ_Cys-rich_dom_sf"/>
</dbReference>
<dbReference type="InterPro" id="IPR036869">
    <property type="entry name" value="J_dom_sf"/>
</dbReference>
<dbReference type="NCBIfam" id="TIGR02349">
    <property type="entry name" value="DnaJ_bact"/>
    <property type="match status" value="1"/>
</dbReference>
<dbReference type="NCBIfam" id="NF008035">
    <property type="entry name" value="PRK10767.1"/>
    <property type="match status" value="1"/>
</dbReference>
<dbReference type="NCBIfam" id="NF010873">
    <property type="entry name" value="PRK14280.1"/>
    <property type="match status" value="1"/>
</dbReference>
<dbReference type="PANTHER" id="PTHR43096:SF48">
    <property type="entry name" value="CHAPERONE PROTEIN DNAJ"/>
    <property type="match status" value="1"/>
</dbReference>
<dbReference type="PANTHER" id="PTHR43096">
    <property type="entry name" value="DNAJ HOMOLOG 1, MITOCHONDRIAL-RELATED"/>
    <property type="match status" value="1"/>
</dbReference>
<dbReference type="Pfam" id="PF00226">
    <property type="entry name" value="DnaJ"/>
    <property type="match status" value="1"/>
</dbReference>
<dbReference type="Pfam" id="PF01556">
    <property type="entry name" value="DnaJ_C"/>
    <property type="match status" value="1"/>
</dbReference>
<dbReference type="Pfam" id="PF00684">
    <property type="entry name" value="DnaJ_CXXCXGXG"/>
    <property type="match status" value="1"/>
</dbReference>
<dbReference type="PRINTS" id="PR00625">
    <property type="entry name" value="JDOMAIN"/>
</dbReference>
<dbReference type="SMART" id="SM00271">
    <property type="entry name" value="DnaJ"/>
    <property type="match status" value="1"/>
</dbReference>
<dbReference type="SUPFAM" id="SSF46565">
    <property type="entry name" value="Chaperone J-domain"/>
    <property type="match status" value="1"/>
</dbReference>
<dbReference type="SUPFAM" id="SSF57938">
    <property type="entry name" value="DnaJ/Hsp40 cysteine-rich domain"/>
    <property type="match status" value="1"/>
</dbReference>
<dbReference type="SUPFAM" id="SSF49493">
    <property type="entry name" value="HSP40/DnaJ peptide-binding domain"/>
    <property type="match status" value="2"/>
</dbReference>
<dbReference type="PROSITE" id="PS00636">
    <property type="entry name" value="DNAJ_1"/>
    <property type="match status" value="1"/>
</dbReference>
<dbReference type="PROSITE" id="PS50076">
    <property type="entry name" value="DNAJ_2"/>
    <property type="match status" value="1"/>
</dbReference>
<dbReference type="PROSITE" id="PS51188">
    <property type="entry name" value="ZF_CR"/>
    <property type="match status" value="1"/>
</dbReference>
<evidence type="ECO:0000255" key="1">
    <source>
        <dbReference type="HAMAP-Rule" id="MF_01152"/>
    </source>
</evidence>
<comment type="function">
    <text evidence="1">Participates actively in the response to hyperosmotic and heat shock by preventing the aggregation of stress-denatured proteins and by disaggregating proteins, also in an autonomous, DnaK-independent fashion. Unfolded proteins bind initially to DnaJ; upon interaction with the DnaJ-bound protein, DnaK hydrolyzes its bound ATP, resulting in the formation of a stable complex. GrpE releases ADP from DnaK; ATP binding to DnaK triggers the release of the substrate protein, thus completing the reaction cycle. Several rounds of ATP-dependent interactions between DnaJ, DnaK and GrpE are required for fully efficient folding. Also involved, together with DnaK and GrpE, in the DNA replication of plasmids through activation of initiation proteins.</text>
</comment>
<comment type="cofactor">
    <cofactor evidence="1">
        <name>Zn(2+)</name>
        <dbReference type="ChEBI" id="CHEBI:29105"/>
    </cofactor>
    <text evidence="1">Binds 2 Zn(2+) ions per monomer.</text>
</comment>
<comment type="subunit">
    <text evidence="1">Homodimer.</text>
</comment>
<comment type="subcellular location">
    <subcellularLocation>
        <location evidence="1">Cytoplasm</location>
    </subcellularLocation>
</comment>
<comment type="domain">
    <text evidence="1">The J domain is necessary and sufficient to stimulate DnaK ATPase activity. Zinc center 1 plays an important role in the autonomous, DnaK-independent chaperone activity of DnaJ. Zinc center 2 is essential for interaction with DnaK and for DnaJ activity.</text>
</comment>
<comment type="similarity">
    <text evidence="1">Belongs to the DnaJ family.</text>
</comment>
<reference key="1">
    <citation type="journal article" date="2008" name="Chem. Biol. Interact.">
        <title>Extending the Bacillus cereus group genomics to putative food-borne pathogens of different toxicity.</title>
        <authorList>
            <person name="Lapidus A."/>
            <person name="Goltsman E."/>
            <person name="Auger S."/>
            <person name="Galleron N."/>
            <person name="Segurens B."/>
            <person name="Dossat C."/>
            <person name="Land M.L."/>
            <person name="Broussolle V."/>
            <person name="Brillard J."/>
            <person name="Guinebretiere M.-H."/>
            <person name="Sanchis V."/>
            <person name="Nguen-the C."/>
            <person name="Lereclus D."/>
            <person name="Richardson P."/>
            <person name="Wincker P."/>
            <person name="Weissenbach J."/>
            <person name="Ehrlich S.D."/>
            <person name="Sorokin A."/>
        </authorList>
    </citation>
    <scope>NUCLEOTIDE SEQUENCE [LARGE SCALE GENOMIC DNA]</scope>
    <source>
        <strain>KBAB4</strain>
    </source>
</reference>
<feature type="chain" id="PRO_1000137661" description="Chaperone protein DnaJ">
    <location>
        <begin position="1"/>
        <end position="368"/>
    </location>
</feature>
<feature type="domain" description="J" evidence="1">
    <location>
        <begin position="5"/>
        <end position="69"/>
    </location>
</feature>
<feature type="repeat" description="CXXCXGXG motif">
    <location>
        <begin position="143"/>
        <end position="150"/>
    </location>
</feature>
<feature type="repeat" description="CXXCXGXG motif">
    <location>
        <begin position="160"/>
        <end position="167"/>
    </location>
</feature>
<feature type="repeat" description="CXXCXGXG motif">
    <location>
        <begin position="186"/>
        <end position="193"/>
    </location>
</feature>
<feature type="repeat" description="CXXCXGXG motif">
    <location>
        <begin position="200"/>
        <end position="207"/>
    </location>
</feature>
<feature type="zinc finger region" description="CR-type" evidence="1">
    <location>
        <begin position="130"/>
        <end position="212"/>
    </location>
</feature>
<feature type="binding site" evidence="1">
    <location>
        <position position="143"/>
    </location>
    <ligand>
        <name>Zn(2+)</name>
        <dbReference type="ChEBI" id="CHEBI:29105"/>
        <label>1</label>
    </ligand>
</feature>
<feature type="binding site" evidence="1">
    <location>
        <position position="146"/>
    </location>
    <ligand>
        <name>Zn(2+)</name>
        <dbReference type="ChEBI" id="CHEBI:29105"/>
        <label>1</label>
    </ligand>
</feature>
<feature type="binding site" evidence="1">
    <location>
        <position position="160"/>
    </location>
    <ligand>
        <name>Zn(2+)</name>
        <dbReference type="ChEBI" id="CHEBI:29105"/>
        <label>2</label>
    </ligand>
</feature>
<feature type="binding site" evidence="1">
    <location>
        <position position="163"/>
    </location>
    <ligand>
        <name>Zn(2+)</name>
        <dbReference type="ChEBI" id="CHEBI:29105"/>
        <label>2</label>
    </ligand>
</feature>
<feature type="binding site" evidence="1">
    <location>
        <position position="186"/>
    </location>
    <ligand>
        <name>Zn(2+)</name>
        <dbReference type="ChEBI" id="CHEBI:29105"/>
        <label>2</label>
    </ligand>
</feature>
<feature type="binding site" evidence="1">
    <location>
        <position position="189"/>
    </location>
    <ligand>
        <name>Zn(2+)</name>
        <dbReference type="ChEBI" id="CHEBI:29105"/>
        <label>2</label>
    </ligand>
</feature>
<feature type="binding site" evidence="1">
    <location>
        <position position="200"/>
    </location>
    <ligand>
        <name>Zn(2+)</name>
        <dbReference type="ChEBI" id="CHEBI:29105"/>
        <label>1</label>
    </ligand>
</feature>
<feature type="binding site" evidence="1">
    <location>
        <position position="203"/>
    </location>
    <ligand>
        <name>Zn(2+)</name>
        <dbReference type="ChEBI" id="CHEBI:29105"/>
        <label>1</label>
    </ligand>
</feature>
<protein>
    <recommendedName>
        <fullName evidence="1">Chaperone protein DnaJ</fullName>
    </recommendedName>
</protein>
<gene>
    <name evidence="1" type="primary">dnaJ</name>
    <name type="ordered locus">BcerKBAB4_4164</name>
</gene>
<keyword id="KW-0143">Chaperone</keyword>
<keyword id="KW-0963">Cytoplasm</keyword>
<keyword id="KW-0235">DNA replication</keyword>
<keyword id="KW-0479">Metal-binding</keyword>
<keyword id="KW-0677">Repeat</keyword>
<keyword id="KW-0346">Stress response</keyword>
<keyword id="KW-0862">Zinc</keyword>
<keyword id="KW-0863">Zinc-finger</keyword>
<proteinExistence type="inferred from homology"/>